<proteinExistence type="inferred from homology"/>
<evidence type="ECO:0000255" key="1">
    <source>
        <dbReference type="HAMAP-Rule" id="MF_00201"/>
    </source>
</evidence>
<reference key="1">
    <citation type="journal article" date="2008" name="Genome Res.">
        <title>The genome of Pelotomaculum thermopropionicum reveals niche-associated evolution in anaerobic microbiota.</title>
        <authorList>
            <person name="Kosaka T."/>
            <person name="Kato S."/>
            <person name="Shimoyama T."/>
            <person name="Ishii S."/>
            <person name="Abe T."/>
            <person name="Watanabe K."/>
        </authorList>
    </citation>
    <scope>NUCLEOTIDE SEQUENCE [LARGE SCALE GENOMIC DNA]</scope>
    <source>
        <strain>DSM 13744 / JCM 10971 / SI</strain>
    </source>
</reference>
<keyword id="KW-0227">DNA damage</keyword>
<keyword id="KW-0233">DNA recombination</keyword>
<keyword id="KW-0234">DNA repair</keyword>
<keyword id="KW-1185">Reference proteome</keyword>
<gene>
    <name evidence="1" type="primary">recO</name>
    <name type="ordered locus">PTH_0897</name>
</gene>
<accession>A5D3W7</accession>
<organism>
    <name type="scientific">Pelotomaculum thermopropionicum (strain DSM 13744 / JCM 10971 / SI)</name>
    <dbReference type="NCBI Taxonomy" id="370438"/>
    <lineage>
        <taxon>Bacteria</taxon>
        <taxon>Bacillati</taxon>
        <taxon>Bacillota</taxon>
        <taxon>Clostridia</taxon>
        <taxon>Eubacteriales</taxon>
        <taxon>Desulfotomaculaceae</taxon>
        <taxon>Pelotomaculum</taxon>
    </lineage>
</organism>
<protein>
    <recommendedName>
        <fullName evidence="1">DNA repair protein RecO</fullName>
    </recommendedName>
    <alternativeName>
        <fullName evidence="1">Recombination protein O</fullName>
    </alternativeName>
</protein>
<dbReference type="EMBL" id="AP009389">
    <property type="protein sequence ID" value="BAF59078.1"/>
    <property type="molecule type" value="Genomic_DNA"/>
</dbReference>
<dbReference type="SMR" id="A5D3W7"/>
<dbReference type="STRING" id="370438.PTH_0897"/>
<dbReference type="KEGG" id="pth:PTH_0897"/>
<dbReference type="eggNOG" id="COG1381">
    <property type="taxonomic scope" value="Bacteria"/>
</dbReference>
<dbReference type="HOGENOM" id="CLU_066632_4_0_9"/>
<dbReference type="Proteomes" id="UP000006556">
    <property type="component" value="Chromosome"/>
</dbReference>
<dbReference type="GO" id="GO:0043590">
    <property type="term" value="C:bacterial nucleoid"/>
    <property type="evidence" value="ECO:0007669"/>
    <property type="project" value="TreeGrafter"/>
</dbReference>
<dbReference type="GO" id="GO:0006310">
    <property type="term" value="P:DNA recombination"/>
    <property type="evidence" value="ECO:0007669"/>
    <property type="project" value="UniProtKB-UniRule"/>
</dbReference>
<dbReference type="GO" id="GO:0006302">
    <property type="term" value="P:double-strand break repair"/>
    <property type="evidence" value="ECO:0007669"/>
    <property type="project" value="TreeGrafter"/>
</dbReference>
<dbReference type="Gene3D" id="2.40.50.140">
    <property type="entry name" value="Nucleic acid-binding proteins"/>
    <property type="match status" value="1"/>
</dbReference>
<dbReference type="Gene3D" id="1.20.1440.120">
    <property type="entry name" value="Recombination protein O, C-terminal domain"/>
    <property type="match status" value="1"/>
</dbReference>
<dbReference type="HAMAP" id="MF_00201">
    <property type="entry name" value="RecO"/>
    <property type="match status" value="1"/>
</dbReference>
<dbReference type="InterPro" id="IPR037278">
    <property type="entry name" value="ARFGAP/RecO"/>
</dbReference>
<dbReference type="InterPro" id="IPR022572">
    <property type="entry name" value="DNA_rep/recomb_RecO_N"/>
</dbReference>
<dbReference type="InterPro" id="IPR012340">
    <property type="entry name" value="NA-bd_OB-fold"/>
</dbReference>
<dbReference type="InterPro" id="IPR003717">
    <property type="entry name" value="RecO"/>
</dbReference>
<dbReference type="InterPro" id="IPR042242">
    <property type="entry name" value="RecO_C"/>
</dbReference>
<dbReference type="NCBIfam" id="TIGR00613">
    <property type="entry name" value="reco"/>
    <property type="match status" value="1"/>
</dbReference>
<dbReference type="PANTHER" id="PTHR33991">
    <property type="entry name" value="DNA REPAIR PROTEIN RECO"/>
    <property type="match status" value="1"/>
</dbReference>
<dbReference type="PANTHER" id="PTHR33991:SF1">
    <property type="entry name" value="DNA REPAIR PROTEIN RECO"/>
    <property type="match status" value="1"/>
</dbReference>
<dbReference type="Pfam" id="PF02565">
    <property type="entry name" value="RecO_C"/>
    <property type="match status" value="1"/>
</dbReference>
<dbReference type="Pfam" id="PF11967">
    <property type="entry name" value="RecO_N"/>
    <property type="match status" value="1"/>
</dbReference>
<dbReference type="SUPFAM" id="SSF57863">
    <property type="entry name" value="ArfGap/RecO-like zinc finger"/>
    <property type="match status" value="1"/>
</dbReference>
<dbReference type="SUPFAM" id="SSF50249">
    <property type="entry name" value="Nucleic acid-binding proteins"/>
    <property type="match status" value="1"/>
</dbReference>
<name>RECO_PELTS</name>
<sequence length="256" mass="28377">MKLYKADAIVLRARDCGEGDKILTLYSREHGRIKAMAHGVSKPTSRKRGAVQPFTRSRFLLRRGRELDTVSQCEGVETFPFLRESLERIGYASYVAELVEALTPEGEPNESLFFLLLDVLRLLAGGDAEMLARAFELKVAALLGYCPVLERCSHCQGALAGPLFFSSSLGGAVCGLCVAFAANPVEVNKGTLEILKALLNWPLARIGLLRVNRRFRNRIRLILRQYLTYHLERDLKSYAFLDRFGQAPAGSGAADV</sequence>
<comment type="function">
    <text evidence="1">Involved in DNA repair and RecF pathway recombination.</text>
</comment>
<comment type="similarity">
    <text evidence="1">Belongs to the RecO family.</text>
</comment>
<feature type="chain" id="PRO_1000077734" description="DNA repair protein RecO">
    <location>
        <begin position="1"/>
        <end position="256"/>
    </location>
</feature>